<accession>B2V9U2</accession>
<comment type="function">
    <text evidence="1">Catalyzes the folate-dependent formation of 5-methyl-uridine at position 54 (M-5-U54) in all tRNAs.</text>
</comment>
<comment type="catalytic activity">
    <reaction evidence="1">
        <text>uridine(54) in tRNA + (6R)-5,10-methylene-5,6,7,8-tetrahydrofolate + NADH + H(+) = 5-methyluridine(54) in tRNA + (6S)-5,6,7,8-tetrahydrofolate + NAD(+)</text>
        <dbReference type="Rhea" id="RHEA:16873"/>
        <dbReference type="Rhea" id="RHEA-COMP:10167"/>
        <dbReference type="Rhea" id="RHEA-COMP:10193"/>
        <dbReference type="ChEBI" id="CHEBI:15378"/>
        <dbReference type="ChEBI" id="CHEBI:15636"/>
        <dbReference type="ChEBI" id="CHEBI:57453"/>
        <dbReference type="ChEBI" id="CHEBI:57540"/>
        <dbReference type="ChEBI" id="CHEBI:57945"/>
        <dbReference type="ChEBI" id="CHEBI:65315"/>
        <dbReference type="ChEBI" id="CHEBI:74447"/>
        <dbReference type="EC" id="2.1.1.74"/>
    </reaction>
</comment>
<comment type="catalytic activity">
    <reaction evidence="1">
        <text>uridine(54) in tRNA + (6R)-5,10-methylene-5,6,7,8-tetrahydrofolate + NADPH + H(+) = 5-methyluridine(54) in tRNA + (6S)-5,6,7,8-tetrahydrofolate + NADP(+)</text>
        <dbReference type="Rhea" id="RHEA:62372"/>
        <dbReference type="Rhea" id="RHEA-COMP:10167"/>
        <dbReference type="Rhea" id="RHEA-COMP:10193"/>
        <dbReference type="ChEBI" id="CHEBI:15378"/>
        <dbReference type="ChEBI" id="CHEBI:15636"/>
        <dbReference type="ChEBI" id="CHEBI:57453"/>
        <dbReference type="ChEBI" id="CHEBI:57783"/>
        <dbReference type="ChEBI" id="CHEBI:58349"/>
        <dbReference type="ChEBI" id="CHEBI:65315"/>
        <dbReference type="ChEBI" id="CHEBI:74447"/>
        <dbReference type="EC" id="2.1.1.74"/>
    </reaction>
</comment>
<comment type="cofactor">
    <cofactor evidence="1">
        <name>FAD</name>
        <dbReference type="ChEBI" id="CHEBI:57692"/>
    </cofactor>
</comment>
<comment type="subcellular location">
    <subcellularLocation>
        <location evidence="1">Cytoplasm</location>
    </subcellularLocation>
</comment>
<comment type="similarity">
    <text evidence="1">Belongs to the MnmG family. TrmFO subfamily.</text>
</comment>
<keyword id="KW-0963">Cytoplasm</keyword>
<keyword id="KW-0274">FAD</keyword>
<keyword id="KW-0285">Flavoprotein</keyword>
<keyword id="KW-0489">Methyltransferase</keyword>
<keyword id="KW-0520">NAD</keyword>
<keyword id="KW-0521">NADP</keyword>
<keyword id="KW-0808">Transferase</keyword>
<keyword id="KW-0819">tRNA processing</keyword>
<dbReference type="EC" id="2.1.1.74" evidence="1"/>
<dbReference type="EMBL" id="CP001080">
    <property type="protein sequence ID" value="ACD66715.1"/>
    <property type="molecule type" value="Genomic_DNA"/>
</dbReference>
<dbReference type="RefSeq" id="WP_012459781.1">
    <property type="nucleotide sequence ID" value="NC_010730.1"/>
</dbReference>
<dbReference type="SMR" id="B2V9U2"/>
<dbReference type="STRING" id="436114.SYO3AOP1_1098"/>
<dbReference type="KEGG" id="sul:SYO3AOP1_1098"/>
<dbReference type="eggNOG" id="COG1206">
    <property type="taxonomic scope" value="Bacteria"/>
</dbReference>
<dbReference type="HOGENOM" id="CLU_033057_1_0_0"/>
<dbReference type="GO" id="GO:0005829">
    <property type="term" value="C:cytosol"/>
    <property type="evidence" value="ECO:0007669"/>
    <property type="project" value="TreeGrafter"/>
</dbReference>
<dbReference type="GO" id="GO:0050660">
    <property type="term" value="F:flavin adenine dinucleotide binding"/>
    <property type="evidence" value="ECO:0007669"/>
    <property type="project" value="UniProtKB-UniRule"/>
</dbReference>
<dbReference type="GO" id="GO:0047151">
    <property type="term" value="F:tRNA (uracil(54)-C5)-methyltransferase activity, 5,10-methylenetetrahydrofolate-dependent"/>
    <property type="evidence" value="ECO:0007669"/>
    <property type="project" value="UniProtKB-UniRule"/>
</dbReference>
<dbReference type="GO" id="GO:0030488">
    <property type="term" value="P:tRNA methylation"/>
    <property type="evidence" value="ECO:0007669"/>
    <property type="project" value="TreeGrafter"/>
</dbReference>
<dbReference type="GO" id="GO:0002098">
    <property type="term" value="P:tRNA wobble uridine modification"/>
    <property type="evidence" value="ECO:0007669"/>
    <property type="project" value="TreeGrafter"/>
</dbReference>
<dbReference type="Gene3D" id="3.50.50.60">
    <property type="entry name" value="FAD/NAD(P)-binding domain"/>
    <property type="match status" value="2"/>
</dbReference>
<dbReference type="HAMAP" id="MF_01037">
    <property type="entry name" value="TrmFO"/>
    <property type="match status" value="1"/>
</dbReference>
<dbReference type="InterPro" id="IPR036188">
    <property type="entry name" value="FAD/NAD-bd_sf"/>
</dbReference>
<dbReference type="InterPro" id="IPR002218">
    <property type="entry name" value="MnmG-rel"/>
</dbReference>
<dbReference type="InterPro" id="IPR020595">
    <property type="entry name" value="MnmG-rel_CS"/>
</dbReference>
<dbReference type="InterPro" id="IPR040131">
    <property type="entry name" value="MnmG_N"/>
</dbReference>
<dbReference type="InterPro" id="IPR004417">
    <property type="entry name" value="TrmFO"/>
</dbReference>
<dbReference type="NCBIfam" id="TIGR00137">
    <property type="entry name" value="gid_trmFO"/>
    <property type="match status" value="1"/>
</dbReference>
<dbReference type="NCBIfam" id="NF003739">
    <property type="entry name" value="PRK05335.1"/>
    <property type="match status" value="1"/>
</dbReference>
<dbReference type="PANTHER" id="PTHR11806">
    <property type="entry name" value="GLUCOSE INHIBITED DIVISION PROTEIN A"/>
    <property type="match status" value="1"/>
</dbReference>
<dbReference type="PANTHER" id="PTHR11806:SF2">
    <property type="entry name" value="METHYLENETETRAHYDROFOLATE--TRNA-(URACIL-5-)-METHYLTRANSFERASE TRMFO"/>
    <property type="match status" value="1"/>
</dbReference>
<dbReference type="Pfam" id="PF01134">
    <property type="entry name" value="GIDA"/>
    <property type="match status" value="1"/>
</dbReference>
<dbReference type="SUPFAM" id="SSF51905">
    <property type="entry name" value="FAD/NAD(P)-binding domain"/>
    <property type="match status" value="1"/>
</dbReference>
<dbReference type="PROSITE" id="PS01281">
    <property type="entry name" value="GIDA_2"/>
    <property type="match status" value="1"/>
</dbReference>
<feature type="chain" id="PRO_1000149483" description="Methylenetetrahydrofolate--tRNA-(uracil-5-)-methyltransferase TrmFO">
    <location>
        <begin position="1"/>
        <end position="438"/>
    </location>
</feature>
<feature type="binding site" evidence="1">
    <location>
        <begin position="7"/>
        <end position="12"/>
    </location>
    <ligand>
        <name>FAD</name>
        <dbReference type="ChEBI" id="CHEBI:57692"/>
    </ligand>
</feature>
<proteinExistence type="inferred from homology"/>
<protein>
    <recommendedName>
        <fullName evidence="1">Methylenetetrahydrofolate--tRNA-(uracil-5-)-methyltransferase TrmFO</fullName>
        <ecNumber evidence="1">2.1.1.74</ecNumber>
    </recommendedName>
    <alternativeName>
        <fullName evidence="1">Folate-dependent tRNA (uracil-5-)-methyltransferase</fullName>
    </alternativeName>
    <alternativeName>
        <fullName evidence="1">Folate-dependent tRNA(M-5-U54)-methyltransferase</fullName>
    </alternativeName>
</protein>
<name>TRMFO_SULSY</name>
<sequence>MKVAVIGAGLAGSEAAYKIAQAGYKVDLYEMRPEKQTPAHKTPYFAEIVCSNSFGSESLTSGAGLLKKEMEVLGSIILDVAKEFKVPAGQAFAVDREKFSKKLTEILENHPNINVIRQEVKTLPDADIIVIATGPLTSEEFSKEIQKITGSEYLYFYDAIAPVVDASTVDFSKGFWADRYGKGTGDYFNCVLSEQEYEIFYQELLKGEQVPLKDFERAVYFEGCLPIEEIARRGKETLLYGPMKPVGLIDPKTGKRPYAVVQLRKENIEGTLLSLVGFQTKLKYPEQKRIFSLIPALKDAEFVKLGSIHRNTFIQSQKLLKPTLQLRKKPNILFAGQITGVEGYMASAATGIIAGINVARMLEGKEPVVPPKTTMIGGLINYITTAKNELQPMGPNYALLPELEEKIKGKEERKLKKAEIALKDIKEWTKEIESAVFI</sequence>
<organism>
    <name type="scientific">Sulfurihydrogenibium sp. (strain YO3AOP1)</name>
    <dbReference type="NCBI Taxonomy" id="436114"/>
    <lineage>
        <taxon>Bacteria</taxon>
        <taxon>Pseudomonadati</taxon>
        <taxon>Aquificota</taxon>
        <taxon>Aquificia</taxon>
        <taxon>Aquificales</taxon>
        <taxon>Hydrogenothermaceae</taxon>
        <taxon>Sulfurihydrogenibium</taxon>
    </lineage>
</organism>
<gene>
    <name evidence="1" type="primary">trmFO</name>
    <name type="ordered locus">SYO3AOP1_1098</name>
</gene>
<reference key="1">
    <citation type="journal article" date="2009" name="J. Bacteriol.">
        <title>Complete and draft genome sequences of six members of the Aquificales.</title>
        <authorList>
            <person name="Reysenbach A.-L."/>
            <person name="Hamamura N."/>
            <person name="Podar M."/>
            <person name="Griffiths E."/>
            <person name="Ferreira S."/>
            <person name="Hochstein R."/>
            <person name="Heidelberg J."/>
            <person name="Johnson J."/>
            <person name="Mead D."/>
            <person name="Pohorille A."/>
            <person name="Sarmiento M."/>
            <person name="Schweighofer K."/>
            <person name="Seshadri R."/>
            <person name="Voytek M.A."/>
        </authorList>
    </citation>
    <scope>NUCLEOTIDE SEQUENCE [LARGE SCALE GENOMIC DNA]</scope>
    <source>
        <strain>YO3AOP1</strain>
    </source>
</reference>
<evidence type="ECO:0000255" key="1">
    <source>
        <dbReference type="HAMAP-Rule" id="MF_01037"/>
    </source>
</evidence>